<keyword id="KW-0687">Ribonucleoprotein</keyword>
<keyword id="KW-0689">Ribosomal protein</keyword>
<keyword id="KW-0694">RNA-binding</keyword>
<keyword id="KW-0699">rRNA-binding</keyword>
<proteinExistence type="inferred from homology"/>
<accession>Q3M534</accession>
<name>RS4_TRIV2</name>
<evidence type="ECO:0000255" key="1">
    <source>
        <dbReference type="HAMAP-Rule" id="MF_01306"/>
    </source>
</evidence>
<evidence type="ECO:0000256" key="2">
    <source>
        <dbReference type="SAM" id="MobiDB-lite"/>
    </source>
</evidence>
<evidence type="ECO:0000305" key="3"/>
<comment type="function">
    <text evidence="1">One of the primary rRNA binding proteins, it binds directly to 16S rRNA where it nucleates assembly of the body of the 30S subunit.</text>
</comment>
<comment type="function">
    <text evidence="1">With S5 and S12 plays an important role in translational accuracy.</text>
</comment>
<comment type="subunit">
    <text evidence="1">Part of the 30S ribosomal subunit. Contacts protein S5. The interaction surface between S4 and S5 is involved in control of translational fidelity.</text>
</comment>
<comment type="similarity">
    <text evidence="1">Belongs to the universal ribosomal protein uS4 family.</text>
</comment>
<feature type="chain" id="PRO_0000228874" description="Small ribosomal subunit protein uS4">
    <location>
        <begin position="1"/>
        <end position="202"/>
    </location>
</feature>
<feature type="domain" description="S4 RNA-binding" evidence="1">
    <location>
        <begin position="90"/>
        <end position="152"/>
    </location>
</feature>
<feature type="region of interest" description="Disordered" evidence="2">
    <location>
        <begin position="22"/>
        <end position="43"/>
    </location>
</feature>
<sequence>MSRYRGPRLRIVRRLGDLPGLTRKSARRAYPPGQHGQNRKKRSEYAIRLEEKQKLRLNYGLTEKQLLRYVRRARRVTGSTGQVLLQLLEMRLDNTVFRLGMAPTIPAARQLVNHGHVTVNGRVVNIASYQCRPGEEIAVRDKAPSRKLVENNLQYPGLANLPSHLEFDKNKLVGKVNGVIEREWVALQVNELLVVEYYSRQA</sequence>
<dbReference type="EMBL" id="CP000117">
    <property type="protein sequence ID" value="ABA23902.1"/>
    <property type="molecule type" value="Genomic_DNA"/>
</dbReference>
<dbReference type="SMR" id="Q3M534"/>
<dbReference type="STRING" id="240292.Ava_4303"/>
<dbReference type="KEGG" id="ava:Ava_4303"/>
<dbReference type="eggNOG" id="COG0522">
    <property type="taxonomic scope" value="Bacteria"/>
</dbReference>
<dbReference type="HOGENOM" id="CLU_092403_0_5_3"/>
<dbReference type="Proteomes" id="UP000002533">
    <property type="component" value="Chromosome"/>
</dbReference>
<dbReference type="GO" id="GO:0015935">
    <property type="term" value="C:small ribosomal subunit"/>
    <property type="evidence" value="ECO:0007669"/>
    <property type="project" value="InterPro"/>
</dbReference>
<dbReference type="GO" id="GO:0019843">
    <property type="term" value="F:rRNA binding"/>
    <property type="evidence" value="ECO:0007669"/>
    <property type="project" value="UniProtKB-UniRule"/>
</dbReference>
<dbReference type="GO" id="GO:0003735">
    <property type="term" value="F:structural constituent of ribosome"/>
    <property type="evidence" value="ECO:0007669"/>
    <property type="project" value="InterPro"/>
</dbReference>
<dbReference type="GO" id="GO:0042274">
    <property type="term" value="P:ribosomal small subunit biogenesis"/>
    <property type="evidence" value="ECO:0007669"/>
    <property type="project" value="TreeGrafter"/>
</dbReference>
<dbReference type="GO" id="GO:0006412">
    <property type="term" value="P:translation"/>
    <property type="evidence" value="ECO:0007669"/>
    <property type="project" value="UniProtKB-UniRule"/>
</dbReference>
<dbReference type="CDD" id="cd00165">
    <property type="entry name" value="S4"/>
    <property type="match status" value="1"/>
</dbReference>
<dbReference type="FunFam" id="3.10.290.10:FF:000001">
    <property type="entry name" value="30S ribosomal protein S4"/>
    <property type="match status" value="1"/>
</dbReference>
<dbReference type="FunFam" id="1.10.1050.10:FF:000002">
    <property type="entry name" value="30S ribosomal protein S4, chloroplastic"/>
    <property type="match status" value="1"/>
</dbReference>
<dbReference type="Gene3D" id="1.10.1050.10">
    <property type="entry name" value="Ribosomal Protein S4 Delta 41, Chain A, domain 1"/>
    <property type="match status" value="1"/>
</dbReference>
<dbReference type="Gene3D" id="3.10.290.10">
    <property type="entry name" value="RNA-binding S4 domain"/>
    <property type="match status" value="1"/>
</dbReference>
<dbReference type="HAMAP" id="MF_01306_B">
    <property type="entry name" value="Ribosomal_uS4_B"/>
    <property type="match status" value="1"/>
</dbReference>
<dbReference type="InterPro" id="IPR022801">
    <property type="entry name" value="Ribosomal_uS4"/>
</dbReference>
<dbReference type="InterPro" id="IPR005709">
    <property type="entry name" value="Ribosomal_uS4_bac-type"/>
</dbReference>
<dbReference type="InterPro" id="IPR018079">
    <property type="entry name" value="Ribosomal_uS4_CS"/>
</dbReference>
<dbReference type="InterPro" id="IPR001912">
    <property type="entry name" value="Ribosomal_uS4_N"/>
</dbReference>
<dbReference type="InterPro" id="IPR002942">
    <property type="entry name" value="S4_RNA-bd"/>
</dbReference>
<dbReference type="InterPro" id="IPR036986">
    <property type="entry name" value="S4_RNA-bd_sf"/>
</dbReference>
<dbReference type="NCBIfam" id="NF003717">
    <property type="entry name" value="PRK05327.1"/>
    <property type="match status" value="1"/>
</dbReference>
<dbReference type="NCBIfam" id="TIGR01017">
    <property type="entry name" value="rpsD_bact"/>
    <property type="match status" value="1"/>
</dbReference>
<dbReference type="PANTHER" id="PTHR11831">
    <property type="entry name" value="30S 40S RIBOSOMAL PROTEIN"/>
    <property type="match status" value="1"/>
</dbReference>
<dbReference type="PANTHER" id="PTHR11831:SF4">
    <property type="entry name" value="SMALL RIBOSOMAL SUBUNIT PROTEIN US4M"/>
    <property type="match status" value="1"/>
</dbReference>
<dbReference type="Pfam" id="PF00163">
    <property type="entry name" value="Ribosomal_S4"/>
    <property type="match status" value="1"/>
</dbReference>
<dbReference type="Pfam" id="PF01479">
    <property type="entry name" value="S4"/>
    <property type="match status" value="1"/>
</dbReference>
<dbReference type="SMART" id="SM01390">
    <property type="entry name" value="Ribosomal_S4"/>
    <property type="match status" value="1"/>
</dbReference>
<dbReference type="SMART" id="SM00363">
    <property type="entry name" value="S4"/>
    <property type="match status" value="1"/>
</dbReference>
<dbReference type="SUPFAM" id="SSF55174">
    <property type="entry name" value="Alpha-L RNA-binding motif"/>
    <property type="match status" value="1"/>
</dbReference>
<dbReference type="PROSITE" id="PS00632">
    <property type="entry name" value="RIBOSOMAL_S4"/>
    <property type="match status" value="1"/>
</dbReference>
<dbReference type="PROSITE" id="PS50889">
    <property type="entry name" value="S4"/>
    <property type="match status" value="1"/>
</dbReference>
<gene>
    <name evidence="1" type="primary">rpsD</name>
    <name evidence="1" type="synonym">rps4</name>
    <name type="ordered locus">Ava_4303</name>
</gene>
<organism>
    <name type="scientific">Trichormus variabilis (strain ATCC 29413 / PCC 7937)</name>
    <name type="common">Anabaena variabilis</name>
    <dbReference type="NCBI Taxonomy" id="240292"/>
    <lineage>
        <taxon>Bacteria</taxon>
        <taxon>Bacillati</taxon>
        <taxon>Cyanobacteriota</taxon>
        <taxon>Cyanophyceae</taxon>
        <taxon>Nostocales</taxon>
        <taxon>Nostocaceae</taxon>
        <taxon>Trichormus</taxon>
    </lineage>
</organism>
<reference key="1">
    <citation type="journal article" date="2014" name="Stand. Genomic Sci.">
        <title>Complete genome sequence of Anabaena variabilis ATCC 29413.</title>
        <authorList>
            <person name="Thiel T."/>
            <person name="Pratte B.S."/>
            <person name="Zhong J."/>
            <person name="Goodwin L."/>
            <person name="Copeland A."/>
            <person name="Lucas S."/>
            <person name="Han C."/>
            <person name="Pitluck S."/>
            <person name="Land M.L."/>
            <person name="Kyrpides N.C."/>
            <person name="Woyke T."/>
        </authorList>
    </citation>
    <scope>NUCLEOTIDE SEQUENCE [LARGE SCALE GENOMIC DNA]</scope>
    <source>
        <strain>ATCC 29413 / PCC 7937</strain>
    </source>
</reference>
<protein>
    <recommendedName>
        <fullName evidence="1">Small ribosomal subunit protein uS4</fullName>
    </recommendedName>
    <alternativeName>
        <fullName evidence="3">30S ribosomal protein S4</fullName>
    </alternativeName>
</protein>